<keyword id="KW-0997">Cell inner membrane</keyword>
<keyword id="KW-1003">Cell membrane</keyword>
<keyword id="KW-0472">Membrane</keyword>
<reference key="1">
    <citation type="journal article" date="2008" name="ISME J.">
        <title>Comparative genomics of two ecotypes of the marine planktonic copiotroph Alteromonas macleodii suggests alternative lifestyles associated with different kinds of particulate organic matter.</title>
        <authorList>
            <person name="Ivars-Martinez E."/>
            <person name="Martin-Cuadrado A.-B."/>
            <person name="D'Auria G."/>
            <person name="Mira A."/>
            <person name="Ferriera S."/>
            <person name="Johnson J."/>
            <person name="Friedman R."/>
            <person name="Rodriguez-Valera F."/>
        </authorList>
    </citation>
    <scope>NUCLEOTIDE SEQUENCE [LARGE SCALE GENOMIC DNA]</scope>
    <source>
        <strain>DSM 17117 / CIP 110805 / LMG 28347 / Deep ecotype</strain>
    </source>
</reference>
<gene>
    <name evidence="1" type="primary">syd</name>
    <name type="ordered locus">MADE_1004905</name>
</gene>
<comment type="function">
    <text evidence="1">Interacts with the SecY protein in vivo. May bind preferentially to an uncomplexed state of SecY, thus functioning either as a chelating agent for excess SecY in the cell or as a regulatory factor that negatively controls the translocase function.</text>
</comment>
<comment type="subcellular location">
    <subcellularLocation>
        <location evidence="1">Cell inner membrane</location>
        <topology evidence="1">Peripheral membrane protein</topology>
        <orientation evidence="1">Cytoplasmic side</orientation>
    </subcellularLocation>
    <text evidence="1">Loosely associated with the cytoplasmic side of the inner membrane, probably via SecY.</text>
</comment>
<comment type="similarity">
    <text evidence="1">Belongs to the Syd family.</text>
</comment>
<feature type="chain" id="PRO_1000137023" description="Protein Syd">
    <location>
        <begin position="1"/>
        <end position="181"/>
    </location>
</feature>
<protein>
    <recommendedName>
        <fullName evidence="1">Protein Syd</fullName>
    </recommendedName>
</protein>
<name>SYDP_ALTMD</name>
<evidence type="ECO:0000255" key="1">
    <source>
        <dbReference type="HAMAP-Rule" id="MF_01104"/>
    </source>
</evidence>
<proteinExistence type="inferred from homology"/>
<sequence length="181" mass="20382">MALTISAQLDKFVSSYVEHAKGEGLKIAFDSEWPSPCYEETAKDGELVEWAPKRQSPPLSFNNVEDALSLKLHADYCCYFTTYYSDNLKAKAPQGDCELLQVFNREDFERLQQNLIGHLLMKQRLNQAPTLFFGLTDEEDFILTVINETGEVALEQVGQAPTQILANSLAEFIEQLSPLNA</sequence>
<accession>B4RVQ6</accession>
<accession>F2GBX6</accession>
<organism>
    <name type="scientific">Alteromonas mediterranea (strain DSM 17117 / CIP 110805 / LMG 28347 / Deep ecotype)</name>
    <dbReference type="NCBI Taxonomy" id="1774373"/>
    <lineage>
        <taxon>Bacteria</taxon>
        <taxon>Pseudomonadati</taxon>
        <taxon>Pseudomonadota</taxon>
        <taxon>Gammaproteobacteria</taxon>
        <taxon>Alteromonadales</taxon>
        <taxon>Alteromonadaceae</taxon>
        <taxon>Alteromonas/Salinimonas group</taxon>
        <taxon>Alteromonas</taxon>
    </lineage>
</organism>
<dbReference type="EMBL" id="CP001103">
    <property type="protein sequence ID" value="AEA97127.1"/>
    <property type="molecule type" value="Genomic_DNA"/>
</dbReference>
<dbReference type="RefSeq" id="WP_012517481.1">
    <property type="nucleotide sequence ID" value="NC_011138.3"/>
</dbReference>
<dbReference type="SMR" id="B4RVQ6"/>
<dbReference type="KEGG" id="amc:MADE_1004905"/>
<dbReference type="HOGENOM" id="CLU_121866_0_0_6"/>
<dbReference type="Proteomes" id="UP000001870">
    <property type="component" value="Chromosome"/>
</dbReference>
<dbReference type="GO" id="GO:0009898">
    <property type="term" value="C:cytoplasmic side of plasma membrane"/>
    <property type="evidence" value="ECO:0007669"/>
    <property type="project" value="InterPro"/>
</dbReference>
<dbReference type="CDD" id="cd16323">
    <property type="entry name" value="Syd"/>
    <property type="match status" value="1"/>
</dbReference>
<dbReference type="Gene3D" id="3.40.1580.20">
    <property type="entry name" value="Syd protein"/>
    <property type="match status" value="1"/>
</dbReference>
<dbReference type="HAMAP" id="MF_01104">
    <property type="entry name" value="Syd"/>
    <property type="match status" value="1"/>
</dbReference>
<dbReference type="InterPro" id="IPR009948">
    <property type="entry name" value="Syd"/>
</dbReference>
<dbReference type="InterPro" id="IPR038228">
    <property type="entry name" value="Syd_sf"/>
</dbReference>
<dbReference type="NCBIfam" id="NF003439">
    <property type="entry name" value="PRK04968.1"/>
    <property type="match status" value="1"/>
</dbReference>
<dbReference type="Pfam" id="PF07348">
    <property type="entry name" value="Syd"/>
    <property type="match status" value="1"/>
</dbReference>